<sequence length="376" mass="41237">MNNVTNIVRRKSTRIYIGNVPIGDGAPIAVQSMVNTRTTDILETVTQINALKKAGVDIVRISIPTMDAAEAFKIIKQQVINTPLVADIHFDYRIALKVAEYGADCLRINPGNIGNNKRIRSVVHCAQDKNISIRIGVNSGSLERDLQKKYDGNPTENVLLESAMRHVDILDKLNFHQFKVSVKSSDVLITIQAYRALASKIDQPLHIGLTEAGALRNGTVKSAMAVGFLLNEGIGDTIRISLATDPIEEVKVAFDILRALRIRAHGINFIACPGCARQEFNVINVVNALEEKVSDITTPMDVSIIGCVVNGPGEALKSTIGVAGARNKSGIYEDGIRQKKRCDNISIIEELERRIRAKSKLLDPNNHNITPTTYNK</sequence>
<organism>
    <name type="scientific">Blochmanniella pennsylvanica (strain BPEN)</name>
    <dbReference type="NCBI Taxonomy" id="291272"/>
    <lineage>
        <taxon>Bacteria</taxon>
        <taxon>Pseudomonadati</taxon>
        <taxon>Pseudomonadota</taxon>
        <taxon>Gammaproteobacteria</taxon>
        <taxon>Enterobacterales</taxon>
        <taxon>Enterobacteriaceae</taxon>
        <taxon>ant endosymbionts</taxon>
        <taxon>Candidatus Blochmanniella</taxon>
    </lineage>
</organism>
<dbReference type="EC" id="1.17.7.3" evidence="1"/>
<dbReference type="EMBL" id="CP000016">
    <property type="protein sequence ID" value="AAZ41161.1"/>
    <property type="molecule type" value="Genomic_DNA"/>
</dbReference>
<dbReference type="RefSeq" id="WP_011283072.1">
    <property type="nucleotide sequence ID" value="NC_007292.1"/>
</dbReference>
<dbReference type="SMR" id="Q492E0"/>
<dbReference type="STRING" id="291272.BPEN_551"/>
<dbReference type="KEGG" id="bpn:BPEN_551"/>
<dbReference type="eggNOG" id="COG0821">
    <property type="taxonomic scope" value="Bacteria"/>
</dbReference>
<dbReference type="HOGENOM" id="CLU_042258_0_0_6"/>
<dbReference type="OrthoDB" id="9803214at2"/>
<dbReference type="UniPathway" id="UPA00056">
    <property type="reaction ID" value="UER00096"/>
</dbReference>
<dbReference type="Proteomes" id="UP000007794">
    <property type="component" value="Chromosome"/>
</dbReference>
<dbReference type="GO" id="GO:0051539">
    <property type="term" value="F:4 iron, 4 sulfur cluster binding"/>
    <property type="evidence" value="ECO:0007669"/>
    <property type="project" value="UniProtKB-UniRule"/>
</dbReference>
<dbReference type="GO" id="GO:0046429">
    <property type="term" value="F:4-hydroxy-3-methylbut-2-en-1-yl diphosphate synthase activity (ferredoxin)"/>
    <property type="evidence" value="ECO:0007669"/>
    <property type="project" value="UniProtKB-UniRule"/>
</dbReference>
<dbReference type="GO" id="GO:0141197">
    <property type="term" value="F:4-hydroxy-3-methylbut-2-enyl-diphosphate synthase activity (flavodoxin)"/>
    <property type="evidence" value="ECO:0007669"/>
    <property type="project" value="UniProtKB-EC"/>
</dbReference>
<dbReference type="GO" id="GO:0005506">
    <property type="term" value="F:iron ion binding"/>
    <property type="evidence" value="ECO:0007669"/>
    <property type="project" value="InterPro"/>
</dbReference>
<dbReference type="GO" id="GO:0019288">
    <property type="term" value="P:isopentenyl diphosphate biosynthetic process, methylerythritol 4-phosphate pathway"/>
    <property type="evidence" value="ECO:0007669"/>
    <property type="project" value="UniProtKB-UniRule"/>
</dbReference>
<dbReference type="GO" id="GO:0016114">
    <property type="term" value="P:terpenoid biosynthetic process"/>
    <property type="evidence" value="ECO:0007669"/>
    <property type="project" value="InterPro"/>
</dbReference>
<dbReference type="FunFam" id="3.20.20.20:FF:000001">
    <property type="entry name" value="4-hydroxy-3-methylbut-2-en-1-yl diphosphate synthase (flavodoxin)"/>
    <property type="match status" value="1"/>
</dbReference>
<dbReference type="Gene3D" id="3.20.20.20">
    <property type="entry name" value="Dihydropteroate synthase-like"/>
    <property type="match status" value="1"/>
</dbReference>
<dbReference type="Gene3D" id="3.30.413.10">
    <property type="entry name" value="Sulfite Reductase Hemoprotein, domain 1"/>
    <property type="match status" value="1"/>
</dbReference>
<dbReference type="HAMAP" id="MF_00159">
    <property type="entry name" value="IspG"/>
    <property type="match status" value="1"/>
</dbReference>
<dbReference type="InterPro" id="IPR011005">
    <property type="entry name" value="Dihydropteroate_synth-like_sf"/>
</dbReference>
<dbReference type="InterPro" id="IPR016425">
    <property type="entry name" value="IspG_bac"/>
</dbReference>
<dbReference type="InterPro" id="IPR004588">
    <property type="entry name" value="IspG_bac-typ"/>
</dbReference>
<dbReference type="InterPro" id="IPR045854">
    <property type="entry name" value="NO2/SO3_Rdtase_4Fe4S_sf"/>
</dbReference>
<dbReference type="NCBIfam" id="TIGR00612">
    <property type="entry name" value="ispG_gcpE"/>
    <property type="match status" value="1"/>
</dbReference>
<dbReference type="NCBIfam" id="NF001540">
    <property type="entry name" value="PRK00366.1"/>
    <property type="match status" value="1"/>
</dbReference>
<dbReference type="PANTHER" id="PTHR30454">
    <property type="entry name" value="4-HYDROXY-3-METHYLBUT-2-EN-1-YL DIPHOSPHATE SYNTHASE"/>
    <property type="match status" value="1"/>
</dbReference>
<dbReference type="PANTHER" id="PTHR30454:SF0">
    <property type="entry name" value="4-HYDROXY-3-METHYLBUT-2-EN-1-YL DIPHOSPHATE SYNTHASE (FERREDOXIN), CHLOROPLASTIC"/>
    <property type="match status" value="1"/>
</dbReference>
<dbReference type="Pfam" id="PF04551">
    <property type="entry name" value="GcpE"/>
    <property type="match status" value="1"/>
</dbReference>
<dbReference type="PIRSF" id="PIRSF004640">
    <property type="entry name" value="IspG"/>
    <property type="match status" value="1"/>
</dbReference>
<dbReference type="SUPFAM" id="SSF51412">
    <property type="entry name" value="Inosine monophosphate dehydrogenase (IMPDH)"/>
    <property type="match status" value="1"/>
</dbReference>
<dbReference type="SUPFAM" id="SSF56014">
    <property type="entry name" value="Nitrite and sulphite reductase 4Fe-4S domain-like"/>
    <property type="match status" value="1"/>
</dbReference>
<feature type="chain" id="PRO_1000011442" description="4-hydroxy-3-methylbut-2-en-1-yl diphosphate synthase (flavodoxin)">
    <location>
        <begin position="1"/>
        <end position="376"/>
    </location>
</feature>
<feature type="binding site" evidence="1">
    <location>
        <position position="272"/>
    </location>
    <ligand>
        <name>[4Fe-4S] cluster</name>
        <dbReference type="ChEBI" id="CHEBI:49883"/>
    </ligand>
</feature>
<feature type="binding site" evidence="1">
    <location>
        <position position="275"/>
    </location>
    <ligand>
        <name>[4Fe-4S] cluster</name>
        <dbReference type="ChEBI" id="CHEBI:49883"/>
    </ligand>
</feature>
<feature type="binding site" evidence="1">
    <location>
        <position position="307"/>
    </location>
    <ligand>
        <name>[4Fe-4S] cluster</name>
        <dbReference type="ChEBI" id="CHEBI:49883"/>
    </ligand>
</feature>
<feature type="binding site" evidence="1">
    <location>
        <position position="314"/>
    </location>
    <ligand>
        <name>[4Fe-4S] cluster</name>
        <dbReference type="ChEBI" id="CHEBI:49883"/>
    </ligand>
</feature>
<protein>
    <recommendedName>
        <fullName evidence="1">4-hydroxy-3-methylbut-2-en-1-yl diphosphate synthase (flavodoxin)</fullName>
        <ecNumber evidence="1">1.17.7.3</ecNumber>
    </recommendedName>
    <alternativeName>
        <fullName evidence="1">1-hydroxy-2-methyl-2-(E)-butenyl 4-diphosphate synthase</fullName>
    </alternativeName>
</protein>
<gene>
    <name evidence="1" type="primary">ispG</name>
    <name type="ordered locus">BPEN_551</name>
</gene>
<comment type="function">
    <text evidence="1">Converts 2C-methyl-D-erythritol 2,4-cyclodiphosphate (ME-2,4cPP) into 1-hydroxy-2-methyl-2-(E)-butenyl 4-diphosphate.</text>
</comment>
<comment type="catalytic activity">
    <reaction evidence="1">
        <text>(2E)-4-hydroxy-3-methylbut-2-enyl diphosphate + oxidized [flavodoxin] + H2O + 2 H(+) = 2-C-methyl-D-erythritol 2,4-cyclic diphosphate + reduced [flavodoxin]</text>
        <dbReference type="Rhea" id="RHEA:43604"/>
        <dbReference type="Rhea" id="RHEA-COMP:10622"/>
        <dbReference type="Rhea" id="RHEA-COMP:10623"/>
        <dbReference type="ChEBI" id="CHEBI:15377"/>
        <dbReference type="ChEBI" id="CHEBI:15378"/>
        <dbReference type="ChEBI" id="CHEBI:57618"/>
        <dbReference type="ChEBI" id="CHEBI:58210"/>
        <dbReference type="ChEBI" id="CHEBI:58483"/>
        <dbReference type="ChEBI" id="CHEBI:128753"/>
        <dbReference type="EC" id="1.17.7.3"/>
    </reaction>
</comment>
<comment type="cofactor">
    <cofactor evidence="1">
        <name>[4Fe-4S] cluster</name>
        <dbReference type="ChEBI" id="CHEBI:49883"/>
    </cofactor>
    <text evidence="1">Binds 1 [4Fe-4S] cluster.</text>
</comment>
<comment type="pathway">
    <text evidence="1">Isoprenoid biosynthesis; isopentenyl diphosphate biosynthesis via DXP pathway; isopentenyl diphosphate from 1-deoxy-D-xylulose 5-phosphate: step 5/6.</text>
</comment>
<comment type="similarity">
    <text evidence="1">Belongs to the IspG family.</text>
</comment>
<evidence type="ECO:0000255" key="1">
    <source>
        <dbReference type="HAMAP-Rule" id="MF_00159"/>
    </source>
</evidence>
<reference key="1">
    <citation type="journal article" date="2005" name="Genome Res.">
        <title>Genome sequence of Blochmannia pennsylvanicus indicates parallel evolutionary trends among bacterial mutualists of insects.</title>
        <authorList>
            <person name="Degnan P.H."/>
            <person name="Lazarus A.B."/>
            <person name="Wernegreen J.J."/>
        </authorList>
    </citation>
    <scope>NUCLEOTIDE SEQUENCE [LARGE SCALE GENOMIC DNA]</scope>
    <source>
        <strain>BPEN</strain>
    </source>
</reference>
<proteinExistence type="inferred from homology"/>
<name>ISPG_BLOPB</name>
<keyword id="KW-0004">4Fe-4S</keyword>
<keyword id="KW-0408">Iron</keyword>
<keyword id="KW-0411">Iron-sulfur</keyword>
<keyword id="KW-0414">Isoprene biosynthesis</keyword>
<keyword id="KW-0479">Metal-binding</keyword>
<keyword id="KW-0560">Oxidoreductase</keyword>
<keyword id="KW-1185">Reference proteome</keyword>
<accession>Q492E0</accession>